<organism>
    <name type="scientific">Shewanella amazonensis (strain ATCC BAA-1098 / SB2B)</name>
    <dbReference type="NCBI Taxonomy" id="326297"/>
    <lineage>
        <taxon>Bacteria</taxon>
        <taxon>Pseudomonadati</taxon>
        <taxon>Pseudomonadota</taxon>
        <taxon>Gammaproteobacteria</taxon>
        <taxon>Alteromonadales</taxon>
        <taxon>Shewanellaceae</taxon>
        <taxon>Shewanella</taxon>
    </lineage>
</organism>
<reference key="1">
    <citation type="submission" date="2006-12" db="EMBL/GenBank/DDBJ databases">
        <title>Complete sequence of Shewanella amazonensis SB2B.</title>
        <authorList>
            <consortium name="US DOE Joint Genome Institute"/>
            <person name="Copeland A."/>
            <person name="Lucas S."/>
            <person name="Lapidus A."/>
            <person name="Barry K."/>
            <person name="Detter J.C."/>
            <person name="Glavina del Rio T."/>
            <person name="Hammon N."/>
            <person name="Israni S."/>
            <person name="Dalin E."/>
            <person name="Tice H."/>
            <person name="Pitluck S."/>
            <person name="Munk A.C."/>
            <person name="Brettin T."/>
            <person name="Bruce D."/>
            <person name="Han C."/>
            <person name="Tapia R."/>
            <person name="Gilna P."/>
            <person name="Schmutz J."/>
            <person name="Larimer F."/>
            <person name="Land M."/>
            <person name="Hauser L."/>
            <person name="Kyrpides N."/>
            <person name="Mikhailova N."/>
            <person name="Fredrickson J."/>
            <person name="Richardson P."/>
        </authorList>
    </citation>
    <scope>NUCLEOTIDE SEQUENCE [LARGE SCALE GENOMIC DNA]</scope>
    <source>
        <strain>ATCC BAA-1098 / SB2B</strain>
    </source>
</reference>
<protein>
    <recommendedName>
        <fullName evidence="1">Large ribosomal subunit protein bL33</fullName>
    </recommendedName>
    <alternativeName>
        <fullName evidence="2">50S ribosomal protein L33</fullName>
    </alternativeName>
</protein>
<dbReference type="EMBL" id="CP000507">
    <property type="protein sequence ID" value="ABL98540.1"/>
    <property type="molecule type" value="Genomic_DNA"/>
</dbReference>
<dbReference type="RefSeq" id="WP_011758450.1">
    <property type="nucleotide sequence ID" value="NC_008700.1"/>
</dbReference>
<dbReference type="SMR" id="A1S2D4"/>
<dbReference type="STRING" id="326297.Sama_0329"/>
<dbReference type="KEGG" id="saz:Sama_0329"/>
<dbReference type="eggNOG" id="COG0267">
    <property type="taxonomic scope" value="Bacteria"/>
</dbReference>
<dbReference type="HOGENOM" id="CLU_190949_1_1_6"/>
<dbReference type="OrthoDB" id="21586at2"/>
<dbReference type="Proteomes" id="UP000009175">
    <property type="component" value="Chromosome"/>
</dbReference>
<dbReference type="GO" id="GO:0022625">
    <property type="term" value="C:cytosolic large ribosomal subunit"/>
    <property type="evidence" value="ECO:0007669"/>
    <property type="project" value="TreeGrafter"/>
</dbReference>
<dbReference type="GO" id="GO:0003735">
    <property type="term" value="F:structural constituent of ribosome"/>
    <property type="evidence" value="ECO:0007669"/>
    <property type="project" value="InterPro"/>
</dbReference>
<dbReference type="GO" id="GO:0006412">
    <property type="term" value="P:translation"/>
    <property type="evidence" value="ECO:0007669"/>
    <property type="project" value="UniProtKB-UniRule"/>
</dbReference>
<dbReference type="FunFam" id="2.20.28.120:FF:000001">
    <property type="entry name" value="50S ribosomal protein L33"/>
    <property type="match status" value="1"/>
</dbReference>
<dbReference type="Gene3D" id="2.20.28.120">
    <property type="entry name" value="Ribosomal protein L33"/>
    <property type="match status" value="1"/>
</dbReference>
<dbReference type="HAMAP" id="MF_00294">
    <property type="entry name" value="Ribosomal_bL33"/>
    <property type="match status" value="1"/>
</dbReference>
<dbReference type="InterPro" id="IPR001705">
    <property type="entry name" value="Ribosomal_bL33"/>
</dbReference>
<dbReference type="InterPro" id="IPR018264">
    <property type="entry name" value="Ribosomal_bL33_CS"/>
</dbReference>
<dbReference type="InterPro" id="IPR038584">
    <property type="entry name" value="Ribosomal_bL33_sf"/>
</dbReference>
<dbReference type="InterPro" id="IPR011332">
    <property type="entry name" value="Ribosomal_zn-bd"/>
</dbReference>
<dbReference type="NCBIfam" id="NF001860">
    <property type="entry name" value="PRK00595.1"/>
    <property type="match status" value="1"/>
</dbReference>
<dbReference type="NCBIfam" id="TIGR01023">
    <property type="entry name" value="rpmG_bact"/>
    <property type="match status" value="1"/>
</dbReference>
<dbReference type="PANTHER" id="PTHR15238">
    <property type="entry name" value="54S RIBOSOMAL PROTEIN L39, MITOCHONDRIAL"/>
    <property type="match status" value="1"/>
</dbReference>
<dbReference type="PANTHER" id="PTHR15238:SF1">
    <property type="entry name" value="LARGE RIBOSOMAL SUBUNIT PROTEIN BL33M"/>
    <property type="match status" value="1"/>
</dbReference>
<dbReference type="Pfam" id="PF00471">
    <property type="entry name" value="Ribosomal_L33"/>
    <property type="match status" value="1"/>
</dbReference>
<dbReference type="SUPFAM" id="SSF57829">
    <property type="entry name" value="Zn-binding ribosomal proteins"/>
    <property type="match status" value="1"/>
</dbReference>
<dbReference type="PROSITE" id="PS00582">
    <property type="entry name" value="RIBOSOMAL_L33"/>
    <property type="match status" value="1"/>
</dbReference>
<feature type="chain" id="PRO_0000356652" description="Large ribosomal subunit protein bL33">
    <location>
        <begin position="1"/>
        <end position="57"/>
    </location>
</feature>
<keyword id="KW-1185">Reference proteome</keyword>
<keyword id="KW-0687">Ribonucleoprotein</keyword>
<keyword id="KW-0689">Ribosomal protein</keyword>
<accession>A1S2D4</accession>
<gene>
    <name evidence="1" type="primary">rpmG</name>
    <name type="ordered locus">Sama_0329</name>
</gene>
<comment type="similarity">
    <text evidence="1">Belongs to the bacterial ribosomal protein bL33 family.</text>
</comment>
<sequence>MAKAKGNREKIKLVSSAKTGHFYTTDKNKRNMPEKMEIKKFDPVIRQHVIYKEAKIK</sequence>
<proteinExistence type="inferred from homology"/>
<evidence type="ECO:0000255" key="1">
    <source>
        <dbReference type="HAMAP-Rule" id="MF_00294"/>
    </source>
</evidence>
<evidence type="ECO:0000305" key="2"/>
<name>RL33_SHEAM</name>